<evidence type="ECO:0000250" key="1"/>
<evidence type="ECO:0000250" key="2">
    <source>
        <dbReference type="UniProtKB" id="P0C2E9"/>
    </source>
</evidence>
<evidence type="ECO:0000250" key="3">
    <source>
        <dbReference type="UniProtKB" id="P0C2J9"/>
    </source>
</evidence>
<evidence type="ECO:0000250" key="4">
    <source>
        <dbReference type="UniProtKB" id="P13128"/>
    </source>
</evidence>
<evidence type="ECO:0000250" key="5">
    <source>
        <dbReference type="UniProtKB" id="Q04IN8"/>
    </source>
</evidence>
<evidence type="ECO:0000256" key="6">
    <source>
        <dbReference type="SAM" id="MobiDB-lite"/>
    </source>
</evidence>
<evidence type="ECO:0000305" key="7"/>
<gene>
    <name type="primary">slo</name>
</gene>
<keyword id="KW-0204">Cytolysis</keyword>
<keyword id="KW-0354">Hemolysis</keyword>
<keyword id="KW-1032">Host cell membrane</keyword>
<keyword id="KW-1043">Host membrane</keyword>
<keyword id="KW-0446">Lipid-binding</keyword>
<keyword id="KW-0472">Membrane</keyword>
<keyword id="KW-0964">Secreted</keyword>
<keyword id="KW-0732">Signal</keyword>
<keyword id="KW-0800">Toxin</keyword>
<keyword id="KW-0812">Transmembrane</keyword>
<keyword id="KW-1134">Transmembrane beta strand</keyword>
<keyword id="KW-0843">Virulence</keyword>
<name>TACY_STREQ</name>
<accession>Q54114</accession>
<sequence length="574" mass="63992">MKDMSNKKIFKKYSRVAGLLTAALIVGNLVTANADSNKQNTANTETTTTNEQPKPESSELTTEKAGQKMDDMLNSNDMIKLAPKEMPLESAEKEEKKSEDNKKSEEDHTEEINDKIYSLNYNELEVLAKNGETIENFVPKEGVKKADKFIVIERKKKNINTTPVDISIIDSVTDRTYPAALQLANKGFTENKPDAVVTKRNPQKIHIDLPGMGDKATVEVNDPTYANVSTAIDNLVNQWHDNYSGGNTLPARTQYTESMVYSKSQIEAALNVNSKILDGTLGIDFKSISKGEKKVMIAAYKQIFYTVSANLPNNPADVFDKSVTLKELQRKGVSNEAPPLFVSNVAYGRTVFVKLETSSKSNDVEAAFSAALKGTDVKTNGKYSDILENSSFTAVVLGGDAAEHNKVVTKDFDVIRNVIKDNATFSRKNPAYPISYTSVFLKNNKIAGVNNRSEYVETTSTEYTSGKINLSHQGAYVAQYEILWDEINYDDKGKEVITKRRWDNNWYSKTSPFSTVIPLGANSRNIRIMARECTGLAWEWWRKVIDERDVKLSKEINVNISGSTLSPYGSITYK</sequence>
<dbReference type="EMBL" id="D16824">
    <property type="protein sequence ID" value="BAA04104.1"/>
    <property type="molecule type" value="Genomic_DNA"/>
</dbReference>
<dbReference type="SMR" id="Q54114"/>
<dbReference type="ABCD" id="Q54114">
    <property type="antibodies" value="1 sequenced antibody"/>
</dbReference>
<dbReference type="GO" id="GO:0005576">
    <property type="term" value="C:extracellular region"/>
    <property type="evidence" value="ECO:0007669"/>
    <property type="project" value="UniProtKB-SubCell"/>
</dbReference>
<dbReference type="GO" id="GO:0020002">
    <property type="term" value="C:host cell plasma membrane"/>
    <property type="evidence" value="ECO:0007669"/>
    <property type="project" value="UniProtKB-SubCell"/>
</dbReference>
<dbReference type="GO" id="GO:0016020">
    <property type="term" value="C:membrane"/>
    <property type="evidence" value="ECO:0007669"/>
    <property type="project" value="UniProtKB-KW"/>
</dbReference>
<dbReference type="GO" id="GO:0015485">
    <property type="term" value="F:cholesterol binding"/>
    <property type="evidence" value="ECO:0007669"/>
    <property type="project" value="InterPro"/>
</dbReference>
<dbReference type="GO" id="GO:0090729">
    <property type="term" value="F:toxin activity"/>
    <property type="evidence" value="ECO:0007669"/>
    <property type="project" value="UniProtKB-KW"/>
</dbReference>
<dbReference type="GO" id="GO:0031640">
    <property type="term" value="P:killing of cells of another organism"/>
    <property type="evidence" value="ECO:0007669"/>
    <property type="project" value="UniProtKB-KW"/>
</dbReference>
<dbReference type="Gene3D" id="3.30.1040.20">
    <property type="match status" value="1"/>
</dbReference>
<dbReference type="Gene3D" id="3.40.30.40">
    <property type="entry name" value="Perfringolysin"/>
    <property type="match status" value="1"/>
</dbReference>
<dbReference type="Gene3D" id="2.60.40.1430">
    <property type="entry name" value="Perfringolysin, domain 4"/>
    <property type="match status" value="1"/>
</dbReference>
<dbReference type="Gene3D" id="3.90.840.10">
    <property type="entry name" value="Thiol-activated cytolysin superfamily/Thiol-activated cytolysin, alpha-beta domain"/>
    <property type="match status" value="1"/>
</dbReference>
<dbReference type="InterPro" id="IPR035390">
    <property type="entry name" value="Thiol_cytolys_C"/>
</dbReference>
<dbReference type="InterPro" id="IPR038700">
    <property type="entry name" value="Thiol_cytolys_C_sf"/>
</dbReference>
<dbReference type="InterPro" id="IPR001869">
    <property type="entry name" value="Thiol_cytolysin"/>
</dbReference>
<dbReference type="InterPro" id="IPR036363">
    <property type="entry name" value="Thiol_cytolysin_ab_sf"/>
</dbReference>
<dbReference type="InterPro" id="IPR036359">
    <property type="entry name" value="Thiol_cytolysin_sf"/>
</dbReference>
<dbReference type="Pfam" id="PF17440">
    <property type="entry name" value="Thiol_cytolys_C"/>
    <property type="match status" value="1"/>
</dbReference>
<dbReference type="Pfam" id="PF01289">
    <property type="entry name" value="Thiol_cytolysin"/>
    <property type="match status" value="1"/>
</dbReference>
<dbReference type="PRINTS" id="PR01400">
    <property type="entry name" value="TACYTOLYSIN"/>
</dbReference>
<dbReference type="SUPFAM" id="SSF56978">
    <property type="entry name" value="Perfringolysin"/>
    <property type="match status" value="1"/>
</dbReference>
<dbReference type="PROSITE" id="PS00481">
    <property type="entry name" value="THIOL_CYTOLYSINS"/>
    <property type="match status" value="1"/>
</dbReference>
<proteinExistence type="inferred from homology"/>
<comment type="function">
    <text evidence="4">A cholesterol-dependent toxin that causes cytolysis by forming pores in cholesterol containing host membranes. After binding to target membranes, the protein undergoes a major conformation change, leading to its insertion in the host membrane and formation of an oligomeric pore complex. Cholesterol is required for binding to host membranes, membrane insertion and pore formation; cholesterol binding is mediated by a Thr-Leu pair in the C-terminus. Can be reversibly inactivated by oxidation.</text>
</comment>
<comment type="subunit">
    <text evidence="5">Homooligomeric pore complex of 35 to 50 subunits; when inserted in the host membrane.</text>
</comment>
<comment type="subcellular location">
    <subcellularLocation>
        <location evidence="3">Secreted</location>
    </subcellularLocation>
    <subcellularLocation>
        <location evidence="4">Host cell membrane</location>
        <topology evidence="5">Multi-pass membrane protein</topology>
    </subcellularLocation>
    <text evidence="3 5">Probably secreted as soluble protein by the accessory Sec system (By similarity). It then inserts into the host cell membrane and forms pores formed by transmembrane beta-strands (By similarity).</text>
</comment>
<comment type="similarity">
    <text evidence="7">Belongs to the cholesterol-dependent cytolysin family.</text>
</comment>
<reference key="1">
    <citation type="journal article" date="1994" name="DNA Seq.">
        <title>Cloning and sequencing the streptolysin O genes of group C and group G streptococci.</title>
        <authorList>
            <person name="Okumura K."/>
            <person name="Hara A."/>
            <person name="Tanaka T."/>
            <person name="Nichiguchi I."/>
            <person name="Minamide W."/>
            <person name="Igarashi H."/>
            <person name="Yutsudo T."/>
        </authorList>
    </citation>
    <scope>NUCLEOTIDE SEQUENCE [GENOMIC DNA]</scope>
    <source>
        <strain>SIMD-1</strain>
    </source>
</reference>
<protein>
    <recommendedName>
        <fullName>Streptolysin O</fullName>
        <shortName>SLO</shortName>
    </recommendedName>
    <alternativeName>
        <fullName>Thiol-activated cytolysin</fullName>
    </alternativeName>
</protein>
<feature type="signal peptide" evidence="1">
    <location>
        <begin position="1"/>
        <end position="36"/>
    </location>
</feature>
<feature type="chain" id="PRO_0000034106" description="Streptolysin O">
    <location>
        <begin position="37"/>
        <end position="574"/>
    </location>
</feature>
<feature type="transmembrane region" description="Beta stranded" evidence="5">
    <location>
        <begin position="263"/>
        <end position="276"/>
    </location>
</feature>
<feature type="transmembrane region" description="Beta stranded" evidence="5">
    <location>
        <begin position="283"/>
        <end position="292"/>
    </location>
</feature>
<feature type="transmembrane region" description="Beta stranded" evidence="5">
    <location>
        <begin position="361"/>
        <end position="370"/>
    </location>
</feature>
<feature type="transmembrane region" description="Beta stranded" evidence="5">
    <location>
        <begin position="378"/>
        <end position="390"/>
    </location>
</feature>
<feature type="region of interest" description="Disordered" evidence="6">
    <location>
        <begin position="37"/>
        <end position="64"/>
    </location>
</feature>
<feature type="region of interest" description="Disordered" evidence="6">
    <location>
        <begin position="84"/>
        <end position="111"/>
    </location>
</feature>
<feature type="short sequence motif" description="Conserved undecapeptide" evidence="7">
    <location>
        <begin position="532"/>
        <end position="542"/>
    </location>
</feature>
<feature type="short sequence motif" description="Cholesterol binding" evidence="2">
    <location>
        <begin position="564"/>
        <end position="565"/>
    </location>
</feature>
<feature type="compositionally biased region" description="Low complexity" evidence="6">
    <location>
        <begin position="37"/>
        <end position="52"/>
    </location>
</feature>
<feature type="compositionally biased region" description="Basic and acidic residues" evidence="6">
    <location>
        <begin position="53"/>
        <end position="64"/>
    </location>
</feature>
<organism>
    <name type="scientific">Streptococcus dysgalactiae subsp. equisimilis</name>
    <name type="common">Streptococcus equisimilis</name>
    <dbReference type="NCBI Taxonomy" id="119602"/>
    <lineage>
        <taxon>Bacteria</taxon>
        <taxon>Bacillati</taxon>
        <taxon>Bacillota</taxon>
        <taxon>Bacilli</taxon>
        <taxon>Lactobacillales</taxon>
        <taxon>Streptococcaceae</taxon>
        <taxon>Streptococcus</taxon>
    </lineage>
</organism>